<dbReference type="EC" id="7.1.1.-" evidence="1"/>
<dbReference type="EMBL" id="CP001359">
    <property type="protein sequence ID" value="ACL67669.1"/>
    <property type="molecule type" value="Genomic_DNA"/>
</dbReference>
<dbReference type="RefSeq" id="WP_012528283.1">
    <property type="nucleotide sequence ID" value="NC_011891.1"/>
</dbReference>
<dbReference type="SMR" id="B8JBR1"/>
<dbReference type="KEGG" id="acp:A2cp1_4352"/>
<dbReference type="HOGENOM" id="CLU_144724_0_0_7"/>
<dbReference type="Proteomes" id="UP000007089">
    <property type="component" value="Chromosome"/>
</dbReference>
<dbReference type="GO" id="GO:0030964">
    <property type="term" value="C:NADH dehydrogenase complex"/>
    <property type="evidence" value="ECO:0007669"/>
    <property type="project" value="TreeGrafter"/>
</dbReference>
<dbReference type="GO" id="GO:0005886">
    <property type="term" value="C:plasma membrane"/>
    <property type="evidence" value="ECO:0007669"/>
    <property type="project" value="UniProtKB-SubCell"/>
</dbReference>
<dbReference type="GO" id="GO:0050136">
    <property type="term" value="F:NADH:ubiquinone reductase (non-electrogenic) activity"/>
    <property type="evidence" value="ECO:0007669"/>
    <property type="project" value="UniProtKB-UniRule"/>
</dbReference>
<dbReference type="GO" id="GO:0048038">
    <property type="term" value="F:quinone binding"/>
    <property type="evidence" value="ECO:0007669"/>
    <property type="project" value="UniProtKB-KW"/>
</dbReference>
<dbReference type="GO" id="GO:0042773">
    <property type="term" value="P:ATP synthesis coupled electron transport"/>
    <property type="evidence" value="ECO:0007669"/>
    <property type="project" value="InterPro"/>
</dbReference>
<dbReference type="FunFam" id="1.10.287.3510:FF:000001">
    <property type="entry name" value="NADH-quinone oxidoreductase subunit K"/>
    <property type="match status" value="1"/>
</dbReference>
<dbReference type="Gene3D" id="1.10.287.3510">
    <property type="match status" value="1"/>
</dbReference>
<dbReference type="HAMAP" id="MF_01456">
    <property type="entry name" value="NDH1_NuoK"/>
    <property type="match status" value="1"/>
</dbReference>
<dbReference type="InterPro" id="IPR001133">
    <property type="entry name" value="NADH_UbQ_OxRdtase_chain4L/K"/>
</dbReference>
<dbReference type="InterPro" id="IPR039428">
    <property type="entry name" value="NUOK/Mnh_C1-like"/>
</dbReference>
<dbReference type="NCBIfam" id="NF004320">
    <property type="entry name" value="PRK05715.1-2"/>
    <property type="match status" value="1"/>
</dbReference>
<dbReference type="NCBIfam" id="NF004321">
    <property type="entry name" value="PRK05715.1-3"/>
    <property type="match status" value="1"/>
</dbReference>
<dbReference type="NCBIfam" id="NF004323">
    <property type="entry name" value="PRK05715.1-5"/>
    <property type="match status" value="1"/>
</dbReference>
<dbReference type="PANTHER" id="PTHR11434:SF16">
    <property type="entry name" value="NADH-UBIQUINONE OXIDOREDUCTASE CHAIN 4L"/>
    <property type="match status" value="1"/>
</dbReference>
<dbReference type="PANTHER" id="PTHR11434">
    <property type="entry name" value="NADH-UBIQUINONE OXIDOREDUCTASE SUBUNIT ND4L"/>
    <property type="match status" value="1"/>
</dbReference>
<dbReference type="Pfam" id="PF00420">
    <property type="entry name" value="Oxidored_q2"/>
    <property type="match status" value="1"/>
</dbReference>
<sequence length="99" mass="10580">MPVEYYLWLAAILFGIGLLGVLTKRNALILMMSVELMLNAANLTFLAFARRSGDLAGHAIAFFVIAVAAAEAAVGLAVVIAIYRSRGAINVDEVRVLSE</sequence>
<name>NUOK_ANAD2</name>
<keyword id="KW-0997">Cell inner membrane</keyword>
<keyword id="KW-1003">Cell membrane</keyword>
<keyword id="KW-0472">Membrane</keyword>
<keyword id="KW-0520">NAD</keyword>
<keyword id="KW-0874">Quinone</keyword>
<keyword id="KW-1278">Translocase</keyword>
<keyword id="KW-0812">Transmembrane</keyword>
<keyword id="KW-1133">Transmembrane helix</keyword>
<keyword id="KW-0813">Transport</keyword>
<keyword id="KW-0830">Ubiquinone</keyword>
<evidence type="ECO:0000255" key="1">
    <source>
        <dbReference type="HAMAP-Rule" id="MF_01456"/>
    </source>
</evidence>
<proteinExistence type="inferred from homology"/>
<reference key="1">
    <citation type="submission" date="2009-01" db="EMBL/GenBank/DDBJ databases">
        <title>Complete sequence of Anaeromyxobacter dehalogenans 2CP-1.</title>
        <authorList>
            <person name="Lucas S."/>
            <person name="Copeland A."/>
            <person name="Lapidus A."/>
            <person name="Glavina del Rio T."/>
            <person name="Dalin E."/>
            <person name="Tice H."/>
            <person name="Bruce D."/>
            <person name="Goodwin L."/>
            <person name="Pitluck S."/>
            <person name="Saunders E."/>
            <person name="Brettin T."/>
            <person name="Detter J.C."/>
            <person name="Han C."/>
            <person name="Larimer F."/>
            <person name="Land M."/>
            <person name="Hauser L."/>
            <person name="Kyrpides N."/>
            <person name="Ovchinnikova G."/>
            <person name="Beliaev A.S."/>
            <person name="Richardson P."/>
        </authorList>
    </citation>
    <scope>NUCLEOTIDE SEQUENCE [LARGE SCALE GENOMIC DNA]</scope>
    <source>
        <strain>2CP-1 / ATCC BAA-258</strain>
    </source>
</reference>
<comment type="function">
    <text evidence="1">NDH-1 shuttles electrons from NADH, via FMN and iron-sulfur (Fe-S) centers, to quinones in the respiratory chain. The immediate electron acceptor for the enzyme in this species is believed to be ubiquinone. Couples the redox reaction to proton translocation (for every two electrons transferred, four hydrogen ions are translocated across the cytoplasmic membrane), and thus conserves the redox energy in a proton gradient.</text>
</comment>
<comment type="catalytic activity">
    <reaction evidence="1">
        <text>a quinone + NADH + 5 H(+)(in) = a quinol + NAD(+) + 4 H(+)(out)</text>
        <dbReference type="Rhea" id="RHEA:57888"/>
        <dbReference type="ChEBI" id="CHEBI:15378"/>
        <dbReference type="ChEBI" id="CHEBI:24646"/>
        <dbReference type="ChEBI" id="CHEBI:57540"/>
        <dbReference type="ChEBI" id="CHEBI:57945"/>
        <dbReference type="ChEBI" id="CHEBI:132124"/>
    </reaction>
</comment>
<comment type="subunit">
    <text evidence="1">NDH-1 is composed of 14 different subunits. Subunits NuoA, H, J, K, L, M, N constitute the membrane sector of the complex.</text>
</comment>
<comment type="subcellular location">
    <subcellularLocation>
        <location evidence="1">Cell inner membrane</location>
        <topology evidence="1">Multi-pass membrane protein</topology>
    </subcellularLocation>
</comment>
<comment type="similarity">
    <text evidence="1">Belongs to the complex I subunit 4L family.</text>
</comment>
<organism>
    <name type="scientific">Anaeromyxobacter dehalogenans (strain 2CP-1 / ATCC BAA-258)</name>
    <dbReference type="NCBI Taxonomy" id="455488"/>
    <lineage>
        <taxon>Bacteria</taxon>
        <taxon>Pseudomonadati</taxon>
        <taxon>Myxococcota</taxon>
        <taxon>Myxococcia</taxon>
        <taxon>Myxococcales</taxon>
        <taxon>Cystobacterineae</taxon>
        <taxon>Anaeromyxobacteraceae</taxon>
        <taxon>Anaeromyxobacter</taxon>
    </lineage>
</organism>
<gene>
    <name evidence="1" type="primary">nuoK</name>
    <name type="ordered locus">A2cp1_4352</name>
</gene>
<accession>B8JBR1</accession>
<protein>
    <recommendedName>
        <fullName evidence="1">NADH-quinone oxidoreductase subunit K</fullName>
        <ecNumber evidence="1">7.1.1.-</ecNumber>
    </recommendedName>
    <alternativeName>
        <fullName evidence="1">NADH dehydrogenase I subunit K</fullName>
    </alternativeName>
    <alternativeName>
        <fullName evidence="1">NDH-1 subunit K</fullName>
    </alternativeName>
</protein>
<feature type="chain" id="PRO_0000389925" description="NADH-quinone oxidoreductase subunit K">
    <location>
        <begin position="1"/>
        <end position="99"/>
    </location>
</feature>
<feature type="transmembrane region" description="Helical" evidence="1">
    <location>
        <begin position="2"/>
        <end position="22"/>
    </location>
</feature>
<feature type="transmembrane region" description="Helical" evidence="1">
    <location>
        <begin position="28"/>
        <end position="48"/>
    </location>
</feature>
<feature type="transmembrane region" description="Helical" evidence="1">
    <location>
        <begin position="60"/>
        <end position="80"/>
    </location>
</feature>